<comment type="function">
    <text evidence="1">Catalyzes the third of the four reactions of the long-chain fatty acids elongation cycle. This endoplasmic reticulum-bound enzymatic process, allows the addition of two carbons to the chain of long- and very long-chain fatty acids/VLCFAs per cycle. This enzyme catalyzes the dehydration of the 3-hydroxyacyl-CoA intermediate into trans-2,3-enoyl-CoA, within each cycle of fatty acid elongation. Thereby, it participates in the production of VLCFAs of different chain lengths that are involved in multiple biological processes as precursors of membrane lipids and lipid mediators.</text>
</comment>
<comment type="catalytic activity">
    <reaction evidence="1">
        <text>a very-long-chain (3R)-3-hydroxyacyl-CoA = a very-long-chain (2E)-enoyl-CoA + H2O</text>
        <dbReference type="Rhea" id="RHEA:45812"/>
        <dbReference type="ChEBI" id="CHEBI:15377"/>
        <dbReference type="ChEBI" id="CHEBI:83728"/>
        <dbReference type="ChEBI" id="CHEBI:85440"/>
        <dbReference type="EC" id="4.2.1.134"/>
    </reaction>
</comment>
<comment type="pathway">
    <text evidence="1">Lipid metabolism; fatty acid biosynthesis.</text>
</comment>
<comment type="subcellular location">
    <subcellularLocation>
        <location evidence="1">Endoplasmic reticulum membrane</location>
        <topology evidence="1">Multi-pass membrane protein</topology>
    </subcellularLocation>
</comment>
<comment type="similarity">
    <text evidence="3">Belongs to the very long-chain fatty acids dehydratase HACD family.</text>
</comment>
<name>HACD_SCHPO</name>
<keyword id="KW-0256">Endoplasmic reticulum</keyword>
<keyword id="KW-0275">Fatty acid biosynthesis</keyword>
<keyword id="KW-0276">Fatty acid metabolism</keyword>
<keyword id="KW-0444">Lipid biosynthesis</keyword>
<keyword id="KW-0443">Lipid metabolism</keyword>
<keyword id="KW-0456">Lyase</keyword>
<keyword id="KW-0472">Membrane</keyword>
<keyword id="KW-1185">Reference proteome</keyword>
<keyword id="KW-0812">Transmembrane</keyword>
<keyword id="KW-1133">Transmembrane helix</keyword>
<dbReference type="EC" id="4.2.1.134" evidence="1"/>
<dbReference type="EMBL" id="CU329671">
    <property type="protein sequence ID" value="CAB52042.1"/>
    <property type="molecule type" value="Genomic_DNA"/>
</dbReference>
<dbReference type="PIR" id="T39806">
    <property type="entry name" value="T39806"/>
</dbReference>
<dbReference type="RefSeq" id="NP_595700.1">
    <property type="nucleotide sequence ID" value="NM_001021597.2"/>
</dbReference>
<dbReference type="BioGRID" id="277210">
    <property type="interactions" value="3"/>
</dbReference>
<dbReference type="FunCoup" id="O14346">
    <property type="interactions" value="393"/>
</dbReference>
<dbReference type="STRING" id="284812.O14346"/>
<dbReference type="PaxDb" id="4896-SPBC19C2.15c.1"/>
<dbReference type="EnsemblFungi" id="SPBC19C2.15c.1">
    <property type="protein sequence ID" value="SPBC19C2.15c.1:pep"/>
    <property type="gene ID" value="SPBC19C2.15c"/>
</dbReference>
<dbReference type="GeneID" id="2540685"/>
<dbReference type="KEGG" id="spo:2540685"/>
<dbReference type="PomBase" id="SPBC19C2.15c"/>
<dbReference type="VEuPathDB" id="FungiDB:SPBC19C2.15c"/>
<dbReference type="eggNOG" id="KOG3187">
    <property type="taxonomic scope" value="Eukaryota"/>
</dbReference>
<dbReference type="HOGENOM" id="CLU_034302_6_1_1"/>
<dbReference type="InParanoid" id="O14346"/>
<dbReference type="OMA" id="WSYILWQ"/>
<dbReference type="PhylomeDB" id="O14346"/>
<dbReference type="Reactome" id="R-SPO-75876">
    <property type="pathway name" value="Synthesis of very long-chain fatty acyl-CoAs"/>
</dbReference>
<dbReference type="UniPathway" id="UPA00094"/>
<dbReference type="PRO" id="PR:O14346"/>
<dbReference type="Proteomes" id="UP000002485">
    <property type="component" value="Chromosome II"/>
</dbReference>
<dbReference type="GO" id="GO:0005783">
    <property type="term" value="C:endoplasmic reticulum"/>
    <property type="evidence" value="ECO:0007005"/>
    <property type="project" value="PomBase"/>
</dbReference>
<dbReference type="GO" id="GO:0005789">
    <property type="term" value="C:endoplasmic reticulum membrane"/>
    <property type="evidence" value="ECO:0000318"/>
    <property type="project" value="GO_Central"/>
</dbReference>
<dbReference type="GO" id="GO:0018812">
    <property type="term" value="F:3-hydroxyacyl-CoA dehydratase activity"/>
    <property type="evidence" value="ECO:0000318"/>
    <property type="project" value="GO_Central"/>
</dbReference>
<dbReference type="GO" id="GO:0102158">
    <property type="term" value="F:very-long-chain (3R)-3-hydroxyacyl-CoA dehydratase activity"/>
    <property type="evidence" value="ECO:0007669"/>
    <property type="project" value="UniProtKB-EC"/>
</dbReference>
<dbReference type="GO" id="GO:0030497">
    <property type="term" value="P:fatty acid elongation"/>
    <property type="evidence" value="ECO:0000318"/>
    <property type="project" value="GO_Central"/>
</dbReference>
<dbReference type="GO" id="GO:0030148">
    <property type="term" value="P:sphingolipid biosynthetic process"/>
    <property type="evidence" value="ECO:0000318"/>
    <property type="project" value="GO_Central"/>
</dbReference>
<dbReference type="GO" id="GO:0042761">
    <property type="term" value="P:very long-chain fatty acid biosynthetic process"/>
    <property type="evidence" value="ECO:0000318"/>
    <property type="project" value="GO_Central"/>
</dbReference>
<dbReference type="InterPro" id="IPR007482">
    <property type="entry name" value="Tyr_Pase-like_PTPLA"/>
</dbReference>
<dbReference type="PANTHER" id="PTHR11035">
    <property type="entry name" value="VERY-LONG-CHAIN (3R)-3-HYDROXYACYL-COA DEHYDRATASE"/>
    <property type="match status" value="1"/>
</dbReference>
<dbReference type="PANTHER" id="PTHR11035:SF3">
    <property type="entry name" value="VERY-LONG-CHAIN (3R)-3-HYDROXYACYL-COA DEHYDRATASE"/>
    <property type="match status" value="1"/>
</dbReference>
<dbReference type="Pfam" id="PF04387">
    <property type="entry name" value="PTPLA"/>
    <property type="match status" value="1"/>
</dbReference>
<proteinExistence type="inferred from homology"/>
<accession>O14346</accession>
<accession>Q9UUC5</accession>
<reference key="1">
    <citation type="journal article" date="2002" name="Nature">
        <title>The genome sequence of Schizosaccharomyces pombe.</title>
        <authorList>
            <person name="Wood V."/>
            <person name="Gwilliam R."/>
            <person name="Rajandream M.A."/>
            <person name="Lyne M.H."/>
            <person name="Lyne R."/>
            <person name="Stewart A."/>
            <person name="Sgouros J.G."/>
            <person name="Peat N."/>
            <person name="Hayles J."/>
            <person name="Baker S.G."/>
            <person name="Basham D."/>
            <person name="Bowman S."/>
            <person name="Brooks K."/>
            <person name="Brown D."/>
            <person name="Brown S."/>
            <person name="Chillingworth T."/>
            <person name="Churcher C.M."/>
            <person name="Collins M."/>
            <person name="Connor R."/>
            <person name="Cronin A."/>
            <person name="Davis P."/>
            <person name="Feltwell T."/>
            <person name="Fraser A."/>
            <person name="Gentles S."/>
            <person name="Goble A."/>
            <person name="Hamlin N."/>
            <person name="Harris D.E."/>
            <person name="Hidalgo J."/>
            <person name="Hodgson G."/>
            <person name="Holroyd S."/>
            <person name="Hornsby T."/>
            <person name="Howarth S."/>
            <person name="Huckle E.J."/>
            <person name="Hunt S."/>
            <person name="Jagels K."/>
            <person name="James K.D."/>
            <person name="Jones L."/>
            <person name="Jones M."/>
            <person name="Leather S."/>
            <person name="McDonald S."/>
            <person name="McLean J."/>
            <person name="Mooney P."/>
            <person name="Moule S."/>
            <person name="Mungall K.L."/>
            <person name="Murphy L.D."/>
            <person name="Niblett D."/>
            <person name="Odell C."/>
            <person name="Oliver K."/>
            <person name="O'Neil S."/>
            <person name="Pearson D."/>
            <person name="Quail M.A."/>
            <person name="Rabbinowitsch E."/>
            <person name="Rutherford K.M."/>
            <person name="Rutter S."/>
            <person name="Saunders D."/>
            <person name="Seeger K."/>
            <person name="Sharp S."/>
            <person name="Skelton J."/>
            <person name="Simmonds M.N."/>
            <person name="Squares R."/>
            <person name="Squares S."/>
            <person name="Stevens K."/>
            <person name="Taylor K."/>
            <person name="Taylor R.G."/>
            <person name="Tivey A."/>
            <person name="Walsh S.V."/>
            <person name="Warren T."/>
            <person name="Whitehead S."/>
            <person name="Woodward J.R."/>
            <person name="Volckaert G."/>
            <person name="Aert R."/>
            <person name="Robben J."/>
            <person name="Grymonprez B."/>
            <person name="Weltjens I."/>
            <person name="Vanstreels E."/>
            <person name="Rieger M."/>
            <person name="Schaefer M."/>
            <person name="Mueller-Auer S."/>
            <person name="Gabel C."/>
            <person name="Fuchs M."/>
            <person name="Duesterhoeft A."/>
            <person name="Fritzc C."/>
            <person name="Holzer E."/>
            <person name="Moestl D."/>
            <person name="Hilbert H."/>
            <person name="Borzym K."/>
            <person name="Langer I."/>
            <person name="Beck A."/>
            <person name="Lehrach H."/>
            <person name="Reinhardt R."/>
            <person name="Pohl T.M."/>
            <person name="Eger P."/>
            <person name="Zimmermann W."/>
            <person name="Wedler H."/>
            <person name="Wambutt R."/>
            <person name="Purnelle B."/>
            <person name="Goffeau A."/>
            <person name="Cadieu E."/>
            <person name="Dreano S."/>
            <person name="Gloux S."/>
            <person name="Lelaure V."/>
            <person name="Mottier S."/>
            <person name="Galibert F."/>
            <person name="Aves S.J."/>
            <person name="Xiang Z."/>
            <person name="Hunt C."/>
            <person name="Moore K."/>
            <person name="Hurst S.M."/>
            <person name="Lucas M."/>
            <person name="Rochet M."/>
            <person name="Gaillardin C."/>
            <person name="Tallada V.A."/>
            <person name="Garzon A."/>
            <person name="Thode G."/>
            <person name="Daga R.R."/>
            <person name="Cruzado L."/>
            <person name="Jimenez J."/>
            <person name="Sanchez M."/>
            <person name="del Rey F."/>
            <person name="Benito J."/>
            <person name="Dominguez A."/>
            <person name="Revuelta J.L."/>
            <person name="Moreno S."/>
            <person name="Armstrong J."/>
            <person name="Forsburg S.L."/>
            <person name="Cerutti L."/>
            <person name="Lowe T."/>
            <person name="McCombie W.R."/>
            <person name="Paulsen I."/>
            <person name="Potashkin J."/>
            <person name="Shpakovski G.V."/>
            <person name="Ussery D."/>
            <person name="Barrell B.G."/>
            <person name="Nurse P."/>
        </authorList>
    </citation>
    <scope>NUCLEOTIDE SEQUENCE [LARGE SCALE GENOMIC DNA]</scope>
    <source>
        <strain>972 / ATCC 24843</strain>
    </source>
</reference>
<protein>
    <recommendedName>
        <fullName evidence="3">Probable very-long-chain (3R)-3-hydroxyacyl-CoA dehydratase</fullName>
        <ecNumber evidence="1">4.2.1.134</ecNumber>
    </recommendedName>
    <alternativeName>
        <fullName>3-hydroxyacyl-CoA dehydratase</fullName>
        <shortName>HACD</shortName>
    </alternativeName>
</protein>
<evidence type="ECO:0000250" key="1">
    <source>
        <dbReference type="UniProtKB" id="P40857"/>
    </source>
</evidence>
<evidence type="ECO:0000255" key="2"/>
<evidence type="ECO:0000305" key="3"/>
<organism>
    <name type="scientific">Schizosaccharomyces pombe (strain 972 / ATCC 24843)</name>
    <name type="common">Fission yeast</name>
    <dbReference type="NCBI Taxonomy" id="284812"/>
    <lineage>
        <taxon>Eukaryota</taxon>
        <taxon>Fungi</taxon>
        <taxon>Dikarya</taxon>
        <taxon>Ascomycota</taxon>
        <taxon>Taphrinomycotina</taxon>
        <taxon>Schizosaccharomycetes</taxon>
        <taxon>Schizosaccharomycetales</taxon>
        <taxon>Schizosaccharomycetaceae</taxon>
        <taxon>Schizosaccharomyces</taxon>
    </lineage>
</organism>
<feature type="chain" id="PRO_0000116858" description="Probable very-long-chain (3R)-3-hydroxyacyl-CoA dehydratase">
    <location>
        <begin position="1"/>
        <end position="208"/>
    </location>
</feature>
<feature type="topological domain" description="Cytoplasmic" evidence="2">
    <location>
        <begin position="1"/>
        <end position="11"/>
    </location>
</feature>
<feature type="transmembrane region" description="Helical" evidence="2">
    <location>
        <begin position="12"/>
        <end position="35"/>
    </location>
</feature>
<feature type="topological domain" description="Lumenal" evidence="2">
    <location>
        <begin position="36"/>
        <end position="46"/>
    </location>
</feature>
<feature type="transmembrane region" description="Helical" evidence="2">
    <location>
        <begin position="47"/>
        <end position="67"/>
    </location>
</feature>
<feature type="topological domain" description="Cytoplasmic" evidence="2">
    <location>
        <begin position="68"/>
        <end position="78"/>
    </location>
</feature>
<feature type="transmembrane region" description="Helical" evidence="2">
    <location>
        <begin position="79"/>
        <end position="97"/>
    </location>
</feature>
<feature type="topological domain" description="Lumenal" evidence="2">
    <location>
        <begin position="98"/>
        <end position="102"/>
    </location>
</feature>
<feature type="transmembrane region" description="Helical" evidence="2">
    <location>
        <begin position="103"/>
        <end position="123"/>
    </location>
</feature>
<feature type="topological domain" description="Cytoplasmic" evidence="2">
    <location>
        <begin position="124"/>
        <end position="134"/>
    </location>
</feature>
<feature type="transmembrane region" description="Helical" evidence="2">
    <location>
        <begin position="135"/>
        <end position="157"/>
    </location>
</feature>
<feature type="topological domain" description="Lumenal" evidence="2">
    <location>
        <begin position="158"/>
        <end position="171"/>
    </location>
</feature>
<feature type="transmembrane region" description="Helical" evidence="2">
    <location>
        <begin position="172"/>
        <end position="192"/>
    </location>
</feature>
<feature type="topological domain" description="Cytoplasmic" evidence="2">
    <location>
        <begin position="193"/>
        <end position="208"/>
    </location>
</feature>
<feature type="active site" evidence="1">
    <location>
        <position position="145"/>
    </location>
</feature>
<feature type="active site" evidence="1">
    <location>
        <position position="152"/>
    </location>
</feature>
<gene>
    <name type="ORF">SPBC19C2.15c</name>
    <name type="ORF">SPBC2F12.16</name>
</gene>
<sequence length="208" mass="24037">MSKILKIQYLKLYNVISCFLWMSVLLRTGLIWGITKDTAVVFHETNTLVRWVQTLAIAEVFHSIFGLVSSSPLTTIIQVASRLYLVWGVCYPFSYVIEGSPIYLSMIIAWSITEIIRYAFYAFNLNGDIPAFLTWLRYNTFLILYPIGAGSEFLLVLKSRIAAQYVWSLNKLLWPILMSIYPPGLYIMYTHMLAQRRKISKRAAARRT</sequence>